<keyword id="KW-0479">Metal-binding</keyword>
<keyword id="KW-1185">Reference proteome</keyword>
<keyword id="KW-0808">Transferase</keyword>
<keyword id="KW-0833">Ubl conjugation pathway</keyword>
<keyword id="KW-0862">Zinc</keyword>
<keyword id="KW-0863">Zinc-finger</keyword>
<organism>
    <name type="scientific">Arabidopsis thaliana</name>
    <name type="common">Mouse-ear cress</name>
    <dbReference type="NCBI Taxonomy" id="3702"/>
    <lineage>
        <taxon>Eukaryota</taxon>
        <taxon>Viridiplantae</taxon>
        <taxon>Streptophyta</taxon>
        <taxon>Embryophyta</taxon>
        <taxon>Tracheophyta</taxon>
        <taxon>Spermatophyta</taxon>
        <taxon>Magnoliopsida</taxon>
        <taxon>eudicotyledons</taxon>
        <taxon>Gunneridae</taxon>
        <taxon>Pentapetalae</taxon>
        <taxon>rosids</taxon>
        <taxon>malvids</taxon>
        <taxon>Brassicales</taxon>
        <taxon>Brassicaceae</taxon>
        <taxon>Camelineae</taxon>
        <taxon>Arabidopsis</taxon>
    </lineage>
</organism>
<evidence type="ECO:0000250" key="1"/>
<evidence type="ECO:0000255" key="2">
    <source>
        <dbReference type="PROSITE-ProRule" id="PRU00175"/>
    </source>
</evidence>
<evidence type="ECO:0000255" key="3">
    <source>
        <dbReference type="PROSITE-ProRule" id="PRU00455"/>
    </source>
</evidence>
<evidence type="ECO:0000305" key="4"/>
<name>SINL7_ARATH</name>
<gene>
    <name type="ordered locus">At5g37890</name>
    <name type="ORF">K18L3.9</name>
</gene>
<sequence length="286" mass="32052">MVGAAILESPGEGIGSNSILSQKRQLSSSDAAKRDAKKRSTMLMDLEILDCPICYEAFTIPIFQCDNGHLACSSCCPKLNNKCPACTSPVGHNRCRAMESVLESILIPCPNAKLGCKKNVSYGKELTHEKECMFSHCACPALDCNYTSSYKDLYTHYRITHMEINQINTFICDIPLSVRMNISKKILIRTEHLTNHLFAVQCFREPYGVYVTVSCIAPSSPELSQYSYALSYTVDGHTVIYQSPEVKRVLKLSFQTPQENFMLIPNSLLRGDVLEMRISVKKLNKE</sequence>
<feature type="chain" id="PRO_0000299196" description="E3 ubiquitin-protein ligase SINA-like 7">
    <location>
        <begin position="1"/>
        <end position="286"/>
    </location>
</feature>
<feature type="zinc finger region" description="RING-type" evidence="2">
    <location>
        <begin position="51"/>
        <end position="87"/>
    </location>
</feature>
<feature type="zinc finger region" description="SIAH-type" evidence="3">
    <location>
        <begin position="104"/>
        <end position="162"/>
    </location>
</feature>
<feature type="region of interest" description="SBD" evidence="1">
    <location>
        <begin position="101"/>
        <end position="285"/>
    </location>
</feature>
<feature type="binding site" evidence="1">
    <location>
        <position position="109"/>
    </location>
    <ligand>
        <name>Zn(2+)</name>
        <dbReference type="ChEBI" id="CHEBI:29105"/>
        <label>1</label>
    </ligand>
</feature>
<feature type="binding site" evidence="1">
    <location>
        <position position="116"/>
    </location>
    <ligand>
        <name>Zn(2+)</name>
        <dbReference type="ChEBI" id="CHEBI:29105"/>
        <label>1</label>
    </ligand>
</feature>
<feature type="binding site" evidence="1">
    <location>
        <position position="128"/>
    </location>
    <ligand>
        <name>Zn(2+)</name>
        <dbReference type="ChEBI" id="CHEBI:29105"/>
        <label>1</label>
    </ligand>
</feature>
<feature type="binding site" evidence="1">
    <location>
        <position position="132"/>
    </location>
    <ligand>
        <name>Zn(2+)</name>
        <dbReference type="ChEBI" id="CHEBI:29105"/>
        <label>1</label>
    </ligand>
</feature>
<feature type="binding site" evidence="1">
    <location>
        <position position="139"/>
    </location>
    <ligand>
        <name>Zn(2+)</name>
        <dbReference type="ChEBI" id="CHEBI:29105"/>
        <label>2</label>
    </ligand>
</feature>
<feature type="binding site" evidence="1">
    <location>
        <position position="144"/>
    </location>
    <ligand>
        <name>Zn(2+)</name>
        <dbReference type="ChEBI" id="CHEBI:29105"/>
        <label>2</label>
    </ligand>
</feature>
<feature type="binding site" evidence="1">
    <location>
        <position position="156"/>
    </location>
    <ligand>
        <name>Zn(2+)</name>
        <dbReference type="ChEBI" id="CHEBI:29105"/>
        <label>2</label>
    </ligand>
</feature>
<feature type="binding site" evidence="1">
    <location>
        <position position="161"/>
    </location>
    <ligand>
        <name>Zn(2+)</name>
        <dbReference type="ChEBI" id="CHEBI:29105"/>
        <label>2</label>
    </ligand>
</feature>
<accession>Q9FKD7</accession>
<comment type="function">
    <text evidence="1">E3 ubiquitin-protein ligase that mediates ubiquitination and subsequent proteasomal degradation of target proteins. E3 ubiquitin ligases accept ubiquitin from an E2 ubiquitin-conjugating enzyme in the form of a thioester and then directly transfers the ubiquitin to targeted substrates. It probably triggers the ubiquitin-mediated degradation of different substrates.</text>
</comment>
<comment type="catalytic activity">
    <reaction>
        <text>S-ubiquitinyl-[E2 ubiquitin-conjugating enzyme]-L-cysteine + [acceptor protein]-L-lysine = [E2 ubiquitin-conjugating enzyme]-L-cysteine + N(6)-ubiquitinyl-[acceptor protein]-L-lysine.</text>
        <dbReference type="EC" id="2.3.2.27"/>
    </reaction>
</comment>
<comment type="pathway">
    <text>Protein modification; protein ubiquitination.</text>
</comment>
<comment type="domain">
    <text evidence="1">The RING-type zinc finger domain is essential for ubiquitin ligase activity.</text>
</comment>
<comment type="domain">
    <text evidence="1">The SBD domain (substrate-binding domain) mediates the homodimerization and the interaction with substrate proteins. It is related to the TRAF family.</text>
</comment>
<comment type="similarity">
    <text evidence="4">Belongs to the SINA (Seven in absentia) family.</text>
</comment>
<proteinExistence type="evidence at transcript level"/>
<reference key="1">
    <citation type="journal article" date="1998" name="DNA Res.">
        <title>Structural analysis of Arabidopsis thaliana chromosome 5. VI. Sequence features of the regions of 1,367,185 bp covered by 19 physically assigned P1 and TAC clones.</title>
        <authorList>
            <person name="Kotani H."/>
            <person name="Nakamura Y."/>
            <person name="Sato S."/>
            <person name="Asamizu E."/>
            <person name="Kaneko T."/>
            <person name="Miyajima N."/>
            <person name="Tabata S."/>
        </authorList>
    </citation>
    <scope>NUCLEOTIDE SEQUENCE [LARGE SCALE GENOMIC DNA]</scope>
    <source>
        <strain>cv. Columbia</strain>
    </source>
</reference>
<reference key="2">
    <citation type="journal article" date="2017" name="Plant J.">
        <title>Araport11: a complete reannotation of the Arabidopsis thaliana reference genome.</title>
        <authorList>
            <person name="Cheng C.Y."/>
            <person name="Krishnakumar V."/>
            <person name="Chan A.P."/>
            <person name="Thibaud-Nissen F."/>
            <person name="Schobel S."/>
            <person name="Town C.D."/>
        </authorList>
    </citation>
    <scope>GENOME REANNOTATION</scope>
    <source>
        <strain>cv. Columbia</strain>
    </source>
</reference>
<reference key="3">
    <citation type="journal article" date="2003" name="Science">
        <title>Empirical analysis of transcriptional activity in the Arabidopsis genome.</title>
        <authorList>
            <person name="Yamada K."/>
            <person name="Lim J."/>
            <person name="Dale J.M."/>
            <person name="Chen H."/>
            <person name="Shinn P."/>
            <person name="Palm C.J."/>
            <person name="Southwick A.M."/>
            <person name="Wu H.C."/>
            <person name="Kim C.J."/>
            <person name="Nguyen M."/>
            <person name="Pham P.K."/>
            <person name="Cheuk R.F."/>
            <person name="Karlin-Newmann G."/>
            <person name="Liu S.X."/>
            <person name="Lam B."/>
            <person name="Sakano H."/>
            <person name="Wu T."/>
            <person name="Yu G."/>
            <person name="Miranda M."/>
            <person name="Quach H.L."/>
            <person name="Tripp M."/>
            <person name="Chang C.H."/>
            <person name="Lee J.M."/>
            <person name="Toriumi M.J."/>
            <person name="Chan M.M."/>
            <person name="Tang C.C."/>
            <person name="Onodera C.S."/>
            <person name="Deng J.M."/>
            <person name="Akiyama K."/>
            <person name="Ansari Y."/>
            <person name="Arakawa T."/>
            <person name="Banh J."/>
            <person name="Banno F."/>
            <person name="Bowser L."/>
            <person name="Brooks S.Y."/>
            <person name="Carninci P."/>
            <person name="Chao Q."/>
            <person name="Choy N."/>
            <person name="Enju A."/>
            <person name="Goldsmith A.D."/>
            <person name="Gurjal M."/>
            <person name="Hansen N.F."/>
            <person name="Hayashizaki Y."/>
            <person name="Johnson-Hopson C."/>
            <person name="Hsuan V.W."/>
            <person name="Iida K."/>
            <person name="Karnes M."/>
            <person name="Khan S."/>
            <person name="Koesema E."/>
            <person name="Ishida J."/>
            <person name="Jiang P.X."/>
            <person name="Jones T."/>
            <person name="Kawai J."/>
            <person name="Kamiya A."/>
            <person name="Meyers C."/>
            <person name="Nakajima M."/>
            <person name="Narusaka M."/>
            <person name="Seki M."/>
            <person name="Sakurai T."/>
            <person name="Satou M."/>
            <person name="Tamse R."/>
            <person name="Vaysberg M."/>
            <person name="Wallender E.K."/>
            <person name="Wong C."/>
            <person name="Yamamura Y."/>
            <person name="Yuan S."/>
            <person name="Shinozaki K."/>
            <person name="Davis R.W."/>
            <person name="Theologis A."/>
            <person name="Ecker J.R."/>
        </authorList>
    </citation>
    <scope>NUCLEOTIDE SEQUENCE [LARGE SCALE MRNA]</scope>
    <source>
        <strain>cv. Columbia</strain>
    </source>
</reference>
<protein>
    <recommendedName>
        <fullName>E3 ubiquitin-protein ligase SINA-like 7</fullName>
        <ecNumber>2.3.2.27</ecNumber>
    </recommendedName>
    <alternativeName>
        <fullName evidence="4">RING-type E3 ubiquitin transferase SINA-like 7</fullName>
    </alternativeName>
    <alternativeName>
        <fullName>Seven in absentia-like protein 7</fullName>
    </alternativeName>
</protein>
<dbReference type="EC" id="2.3.2.27"/>
<dbReference type="EMBL" id="AB012241">
    <property type="protein sequence ID" value="BAB09035.1"/>
    <property type="molecule type" value="Genomic_DNA"/>
</dbReference>
<dbReference type="EMBL" id="CP002688">
    <property type="protein sequence ID" value="AED94244.1"/>
    <property type="molecule type" value="Genomic_DNA"/>
</dbReference>
<dbReference type="EMBL" id="AY072436">
    <property type="protein sequence ID" value="AAL62428.1"/>
    <property type="molecule type" value="mRNA"/>
</dbReference>
<dbReference type="EMBL" id="AY114722">
    <property type="protein sequence ID" value="AAM48041.1"/>
    <property type="molecule type" value="mRNA"/>
</dbReference>
<dbReference type="RefSeq" id="NP_198605.2">
    <property type="nucleotide sequence ID" value="NM_123148.4"/>
</dbReference>
<dbReference type="SMR" id="Q9FKD7"/>
<dbReference type="BioGRID" id="19019">
    <property type="interactions" value="14"/>
</dbReference>
<dbReference type="FunCoup" id="Q9FKD7">
    <property type="interactions" value="701"/>
</dbReference>
<dbReference type="IntAct" id="Q9FKD7">
    <property type="interactions" value="12"/>
</dbReference>
<dbReference type="STRING" id="3702.Q9FKD7"/>
<dbReference type="GlyGen" id="Q9FKD7">
    <property type="glycosylation" value="1 site"/>
</dbReference>
<dbReference type="PaxDb" id="3702-AT5G37890.1"/>
<dbReference type="ProteomicsDB" id="234561"/>
<dbReference type="EnsemblPlants" id="AT5G37890.1">
    <property type="protein sequence ID" value="AT5G37890.1"/>
    <property type="gene ID" value="AT5G37890"/>
</dbReference>
<dbReference type="GeneID" id="833768"/>
<dbReference type="Gramene" id="AT5G37890.1">
    <property type="protein sequence ID" value="AT5G37890.1"/>
    <property type="gene ID" value="AT5G37890"/>
</dbReference>
<dbReference type="KEGG" id="ath:AT5G37890"/>
<dbReference type="Araport" id="AT5G37890"/>
<dbReference type="TAIR" id="AT5G37890">
    <property type="gene designation" value="SINAL7"/>
</dbReference>
<dbReference type="eggNOG" id="KOG3002">
    <property type="taxonomic scope" value="Eukaryota"/>
</dbReference>
<dbReference type="HOGENOM" id="CLU_040603_2_2_1"/>
<dbReference type="InParanoid" id="Q9FKD7"/>
<dbReference type="OMA" id="YMLIANS"/>
<dbReference type="PhylomeDB" id="Q9FKD7"/>
<dbReference type="UniPathway" id="UPA00143"/>
<dbReference type="PRO" id="PR:Q9FKD7"/>
<dbReference type="Proteomes" id="UP000006548">
    <property type="component" value="Chromosome 5"/>
</dbReference>
<dbReference type="ExpressionAtlas" id="Q9FKD7">
    <property type="expression patterns" value="baseline and differential"/>
</dbReference>
<dbReference type="GO" id="GO:0061630">
    <property type="term" value="F:ubiquitin protein ligase activity"/>
    <property type="evidence" value="ECO:0000314"/>
    <property type="project" value="TAIR"/>
</dbReference>
<dbReference type="GO" id="GO:0008270">
    <property type="term" value="F:zinc ion binding"/>
    <property type="evidence" value="ECO:0007669"/>
    <property type="project" value="UniProtKB-KW"/>
</dbReference>
<dbReference type="GO" id="GO:0016567">
    <property type="term" value="P:protein ubiquitination"/>
    <property type="evidence" value="ECO:0007669"/>
    <property type="project" value="UniProtKB-UniPathway"/>
</dbReference>
<dbReference type="GO" id="GO:0009411">
    <property type="term" value="P:response to UV"/>
    <property type="evidence" value="ECO:0000270"/>
    <property type="project" value="TAIR"/>
</dbReference>
<dbReference type="CDD" id="cd16571">
    <property type="entry name" value="RING-HC_SIAHs"/>
    <property type="match status" value="1"/>
</dbReference>
<dbReference type="FunFam" id="3.30.40.10:FF:000840">
    <property type="entry name" value="E3 ubiquitin-protein ligase SINA-like 5"/>
    <property type="match status" value="1"/>
</dbReference>
<dbReference type="Gene3D" id="3.30.40.10">
    <property type="entry name" value="Zinc/RING finger domain, C3HC4 (zinc finger)"/>
    <property type="match status" value="2"/>
</dbReference>
<dbReference type="InterPro" id="IPR049548">
    <property type="entry name" value="Sina-like_RING"/>
</dbReference>
<dbReference type="InterPro" id="IPR044286">
    <property type="entry name" value="SINL_plant"/>
</dbReference>
<dbReference type="InterPro" id="IPR001841">
    <property type="entry name" value="Znf_RING"/>
</dbReference>
<dbReference type="InterPro" id="IPR013083">
    <property type="entry name" value="Znf_RING/FYVE/PHD"/>
</dbReference>
<dbReference type="InterPro" id="IPR013010">
    <property type="entry name" value="Znf_SIAH"/>
</dbReference>
<dbReference type="PANTHER" id="PTHR46632">
    <property type="entry name" value="E3 UBIQUITIN-PROTEIN LIGASE SINA-LIKE 4"/>
    <property type="match status" value="1"/>
</dbReference>
<dbReference type="PANTHER" id="PTHR46632:SF3">
    <property type="entry name" value="E3 UBIQUITIN-PROTEIN LIGASE SINA-LIKE 7-RELATED"/>
    <property type="match status" value="1"/>
</dbReference>
<dbReference type="Pfam" id="PF21362">
    <property type="entry name" value="Sina_RING"/>
    <property type="match status" value="1"/>
</dbReference>
<dbReference type="Pfam" id="PF21361">
    <property type="entry name" value="Sina_ZnF"/>
    <property type="match status" value="1"/>
</dbReference>
<dbReference type="SUPFAM" id="SSF57850">
    <property type="entry name" value="RING/U-box"/>
    <property type="match status" value="1"/>
</dbReference>
<dbReference type="SUPFAM" id="SSF49599">
    <property type="entry name" value="TRAF domain-like"/>
    <property type="match status" value="1"/>
</dbReference>
<dbReference type="PROSITE" id="PS50089">
    <property type="entry name" value="ZF_RING_2"/>
    <property type="match status" value="1"/>
</dbReference>
<dbReference type="PROSITE" id="PS51081">
    <property type="entry name" value="ZF_SIAH"/>
    <property type="match status" value="1"/>
</dbReference>